<feature type="signal peptide" evidence="2">
    <location>
        <begin position="1"/>
        <end position="21"/>
    </location>
</feature>
<feature type="propeptide" id="PRO_0000400893" evidence="4">
    <location>
        <begin position="22"/>
        <end position="74"/>
    </location>
</feature>
<feature type="peptide" id="PRO_0000400894" description="U11-theraphotoxin-Hhn1a">
    <location>
        <begin position="75"/>
        <end position="113"/>
    </location>
</feature>
<feature type="region of interest" description="Disordered" evidence="3">
    <location>
        <begin position="61"/>
        <end position="83"/>
    </location>
</feature>
<feature type="disulfide bond" evidence="1">
    <location>
        <begin position="75"/>
        <end position="90"/>
    </location>
</feature>
<feature type="disulfide bond" evidence="1">
    <location>
        <begin position="82"/>
        <end position="95"/>
    </location>
</feature>
<feature type="disulfide bond" evidence="1">
    <location>
        <begin position="89"/>
        <end position="110"/>
    </location>
</feature>
<accession>D2Y292</accession>
<comment type="subcellular location">
    <subcellularLocation>
        <location>Secreted</location>
    </subcellularLocation>
</comment>
<comment type="tissue specificity">
    <text>Expressed by the venom gland.</text>
</comment>
<comment type="domain">
    <text evidence="1">The presence of a 'disulfide through disulfide knot' structurally defines this protein as a knottin.</text>
</comment>
<comment type="similarity">
    <text evidence="5">Belongs to the neurotoxin 14 (magi-1) family. 01 (HNTX-16) subfamily.</text>
</comment>
<protein>
    <recommendedName>
        <fullName>U11-theraphotoxin-Hhn1a</fullName>
        <shortName>U11-TRTX-Hhn1a</shortName>
    </recommendedName>
    <alternativeName>
        <fullName>Hainantoxin-XVI.19</fullName>
        <shortName>HNTX-XVI.19</shortName>
    </alternativeName>
    <alternativeName>
        <fullName>Peptide F4-19.87</fullName>
    </alternativeName>
</protein>
<organism>
    <name type="scientific">Cyriopagopus hainanus</name>
    <name type="common">Chinese bird spider</name>
    <name type="synonym">Haplopelma hainanum</name>
    <dbReference type="NCBI Taxonomy" id="209901"/>
    <lineage>
        <taxon>Eukaryota</taxon>
        <taxon>Metazoa</taxon>
        <taxon>Ecdysozoa</taxon>
        <taxon>Arthropoda</taxon>
        <taxon>Chelicerata</taxon>
        <taxon>Arachnida</taxon>
        <taxon>Araneae</taxon>
        <taxon>Mygalomorphae</taxon>
        <taxon>Theraphosidae</taxon>
        <taxon>Haplopelma</taxon>
    </lineage>
</organism>
<name>H1619_CYRHA</name>
<dbReference type="EMBL" id="GU292969">
    <property type="protein sequence ID" value="ADB56785.1"/>
    <property type="molecule type" value="mRNA"/>
</dbReference>
<dbReference type="ArachnoServer" id="AS001592">
    <property type="toxin name" value="U11-theraphotoxin-Hhn1a"/>
</dbReference>
<dbReference type="GO" id="GO:0005576">
    <property type="term" value="C:extracellular region"/>
    <property type="evidence" value="ECO:0007669"/>
    <property type="project" value="UniProtKB-SubCell"/>
</dbReference>
<dbReference type="GO" id="GO:0019871">
    <property type="term" value="F:sodium channel inhibitor activity"/>
    <property type="evidence" value="ECO:0007669"/>
    <property type="project" value="InterPro"/>
</dbReference>
<dbReference type="GO" id="GO:0090729">
    <property type="term" value="F:toxin activity"/>
    <property type="evidence" value="ECO:0007669"/>
    <property type="project" value="UniProtKB-KW"/>
</dbReference>
<dbReference type="InterPro" id="IPR012627">
    <property type="entry name" value="Toxin_22"/>
</dbReference>
<dbReference type="Pfam" id="PF08092">
    <property type="entry name" value="Toxin_22"/>
    <property type="match status" value="1"/>
</dbReference>
<sequence>MNTVRVTFLPVFVLAVSLGQADKDENRMEMQEKTEQGKSYLDFAENLLLQKLEELEAKLLEEDSEESRNSRQKRCIGEGVPCDENDPRCCSGLVCLKPTLHGIWYKSYYCYKK</sequence>
<proteinExistence type="evidence at protein level"/>
<evidence type="ECO:0000250" key="1"/>
<evidence type="ECO:0000255" key="2"/>
<evidence type="ECO:0000256" key="3">
    <source>
        <dbReference type="SAM" id="MobiDB-lite"/>
    </source>
</evidence>
<evidence type="ECO:0000269" key="4">
    <source>
    </source>
</evidence>
<evidence type="ECO:0000305" key="5"/>
<reference key="1">
    <citation type="journal article" date="2010" name="J. Proteome Res.">
        <title>Molecular diversification of peptide toxins from the tarantula Haplopelma hainanum (Ornithoctonus hainana) venom based on transcriptomic, peptidomic, and genomic analyses.</title>
        <authorList>
            <person name="Tang X."/>
            <person name="Zhang Y."/>
            <person name="Hu W."/>
            <person name="Xu D."/>
            <person name="Tao H."/>
            <person name="Yang X."/>
            <person name="Li Y."/>
            <person name="Jiang L."/>
            <person name="Liang S."/>
        </authorList>
    </citation>
    <scope>NUCLEOTIDE SEQUENCE [LARGE SCALE MRNA]</scope>
    <scope>PROTEIN SEQUENCE OF 75-113</scope>
    <scope>IDENTIFICATION BY MASS SPECTROMETRY</scope>
    <source>
        <tissue>Venom</tissue>
        <tissue>Venom gland</tissue>
    </source>
</reference>
<keyword id="KW-0903">Direct protein sequencing</keyword>
<keyword id="KW-1015">Disulfide bond</keyword>
<keyword id="KW-0872">Ion channel impairing toxin</keyword>
<keyword id="KW-0960">Knottin</keyword>
<keyword id="KW-0964">Secreted</keyword>
<keyword id="KW-0732">Signal</keyword>
<keyword id="KW-0800">Toxin</keyword>